<accession>Q9NZJ9</accession>
<accession>B7Z916</accession>
<accession>Q4AEJ6</accession>
<accession>Q53EZ2</accession>
<accession>Q68DD7</accession>
<accession>Q9NPC5</accession>
<accession>Q9NS30</accession>
<accession>Q9NZK0</accession>
<accession>Q9NZK1</accession>
<gene>
    <name evidence="18" type="primary">NUDT4</name>
    <name type="synonym">DIPP2</name>
    <name type="synonym">KIAA0487</name>
    <name type="ORF">HDCMB47P</name>
</gene>
<name>NUDT4_HUMAN</name>
<feature type="chain" id="PRO_0000057058" description="Diphosphoinositol polyphosphate phosphohydrolase 2">
    <location>
        <begin position="1"/>
        <end position="180"/>
    </location>
</feature>
<feature type="domain" description="Nudix hydrolase" evidence="5">
    <location>
        <begin position="18"/>
        <end position="144"/>
    </location>
</feature>
<feature type="short sequence motif" description="Nudix box">
    <location>
        <begin position="51"/>
        <end position="72"/>
    </location>
</feature>
<feature type="active site" description="Proton acceptor" evidence="1">
    <location>
        <position position="69"/>
    </location>
</feature>
<feature type="binding site" evidence="2">
    <location>
        <position position="10"/>
    </location>
    <ligand>
        <name>substrate</name>
    </ligand>
</feature>
<feature type="binding site" evidence="2">
    <location>
        <begin position="18"/>
        <end position="20"/>
    </location>
    <ligand>
        <name>substrate</name>
    </ligand>
</feature>
<feature type="binding site" evidence="2">
    <location>
        <begin position="39"/>
        <end position="41"/>
    </location>
    <ligand>
        <name>substrate</name>
    </ligand>
</feature>
<feature type="binding site" evidence="2">
    <location>
        <position position="50"/>
    </location>
    <ligand>
        <name>Mg(2+)</name>
        <dbReference type="ChEBI" id="CHEBI:18420"/>
        <label>1</label>
    </ligand>
</feature>
<feature type="binding site" evidence="2">
    <location>
        <position position="66"/>
    </location>
    <ligand>
        <name>Mg(2+)</name>
        <dbReference type="ChEBI" id="CHEBI:18420"/>
        <label>2</label>
    </ligand>
</feature>
<feature type="binding site" evidence="2">
    <location>
        <position position="66"/>
    </location>
    <ligand>
        <name>Mg(2+)</name>
        <dbReference type="ChEBI" id="CHEBI:18420"/>
        <label>3</label>
    </ligand>
</feature>
<feature type="binding site" evidence="2">
    <location>
        <position position="70"/>
    </location>
    <ligand>
        <name>Mg(2+)</name>
        <dbReference type="ChEBI" id="CHEBI:18420"/>
        <label>1</label>
    </ligand>
</feature>
<feature type="binding site" evidence="2">
    <location>
        <begin position="89"/>
        <end position="91"/>
    </location>
    <ligand>
        <name>substrate</name>
    </ligand>
</feature>
<feature type="binding site" evidence="2">
    <location>
        <position position="115"/>
    </location>
    <ligand>
        <name>substrate</name>
    </ligand>
</feature>
<feature type="binding site" evidence="2">
    <location>
        <position position="133"/>
    </location>
    <ligand>
        <name>substrate</name>
    </ligand>
</feature>
<feature type="modified residue" description="N-acetylmethionine" evidence="20">
    <location>
        <position position="1"/>
    </location>
</feature>
<feature type="splice variant" id="VSP_014269" description="In isoform 3." evidence="10 12 13">
    <location>
        <begin position="1"/>
        <end position="52"/>
    </location>
</feature>
<feature type="splice variant" id="VSP_014270" description="In isoform 2 and isoform 3." evidence="9 10 11 12 13 14">
    <original>E</original>
    <variation>EQ</variation>
    <location>
        <position position="85"/>
    </location>
</feature>
<feature type="sequence conflict" description="In Ref. 1; AAF68857." evidence="15" ref="1">
    <original>G</original>
    <variation>D</variation>
    <location>
        <position position="16"/>
    </location>
</feature>
<feature type="sequence conflict" description="In Ref. 7; BAD97217." evidence="15" ref="7">
    <original>R</original>
    <variation>Q</variation>
    <location>
        <position position="41"/>
    </location>
</feature>
<feature type="sequence conflict" description="In Ref. 3; AAF75563." evidence="15" ref="3">
    <original>V</original>
    <variation>D</variation>
    <location>
        <position position="73"/>
    </location>
</feature>
<feature type="sequence conflict" description="In Ref. 1; AAF68857." evidence="15" ref="1">
    <original>A</original>
    <variation>V</variation>
    <location>
        <position position="164"/>
    </location>
</feature>
<feature type="sequence conflict" description="In Ref. 1; AAF68858." evidence="15" ref="1">
    <original>S</original>
    <variation>P</variation>
    <location>
        <position position="177"/>
    </location>
</feature>
<feature type="strand" evidence="21">
    <location>
        <begin position="18"/>
        <end position="28"/>
    </location>
</feature>
<feature type="strand" evidence="21">
    <location>
        <begin position="33"/>
        <end position="38"/>
    </location>
</feature>
<feature type="strand" evidence="21">
    <location>
        <begin position="50"/>
        <end position="52"/>
    </location>
</feature>
<feature type="helix" evidence="21">
    <location>
        <begin position="59"/>
        <end position="71"/>
    </location>
</feature>
<feature type="strand" evidence="21">
    <location>
        <begin position="73"/>
        <end position="86"/>
    </location>
</feature>
<feature type="turn" evidence="21">
    <location>
        <begin position="87"/>
        <end position="90"/>
    </location>
</feature>
<feature type="strand" evidence="21">
    <location>
        <begin position="91"/>
        <end position="103"/>
    </location>
</feature>
<feature type="strand" evidence="21">
    <location>
        <begin position="116"/>
        <end position="121"/>
    </location>
</feature>
<feature type="helix" evidence="21">
    <location>
        <begin position="122"/>
        <end position="132"/>
    </location>
</feature>
<feature type="helix" evidence="21">
    <location>
        <begin position="134"/>
        <end position="145"/>
    </location>
</feature>
<organism>
    <name type="scientific">Homo sapiens</name>
    <name type="common">Human</name>
    <dbReference type="NCBI Taxonomy" id="9606"/>
    <lineage>
        <taxon>Eukaryota</taxon>
        <taxon>Metazoa</taxon>
        <taxon>Chordata</taxon>
        <taxon>Craniata</taxon>
        <taxon>Vertebrata</taxon>
        <taxon>Euteleostomi</taxon>
        <taxon>Mammalia</taxon>
        <taxon>Eutheria</taxon>
        <taxon>Euarchontoglires</taxon>
        <taxon>Primates</taxon>
        <taxon>Haplorrhini</taxon>
        <taxon>Catarrhini</taxon>
        <taxon>Hominidae</taxon>
        <taxon>Homo</taxon>
    </lineage>
</organism>
<protein>
    <recommendedName>
        <fullName evidence="9">Diphosphoinositol polyphosphate phosphohydrolase 2</fullName>
        <shortName evidence="9">DIPP-2</shortName>
        <ecNumber evidence="6">3.6.1.52</ecNumber>
    </recommendedName>
    <alternativeName>
        <fullName>Diadenosine 5',5'''-P1,P6-hexaphosphate hydrolase 2</fullName>
        <ecNumber evidence="6">3.6.1.61</ecNumber>
    </alternativeName>
    <alternativeName>
        <fullName>Nucleoside diphosphate-linked moiety X motif 4</fullName>
        <shortName>Nudix motif 4</shortName>
    </alternativeName>
</protein>
<dbReference type="EC" id="3.6.1.52" evidence="6"/>
<dbReference type="EC" id="3.6.1.61" evidence="6"/>
<dbReference type="EMBL" id="AF191649">
    <property type="protein sequence ID" value="AAF68855.1"/>
    <property type="molecule type" value="mRNA"/>
</dbReference>
<dbReference type="EMBL" id="AF191650">
    <property type="protein sequence ID" value="AAF68856.1"/>
    <property type="molecule type" value="mRNA"/>
</dbReference>
<dbReference type="EMBL" id="AF191651">
    <property type="protein sequence ID" value="AAF68857.1"/>
    <property type="molecule type" value="mRNA"/>
</dbReference>
<dbReference type="EMBL" id="AF191652">
    <property type="protein sequence ID" value="AAF68858.2"/>
    <property type="molecule type" value="mRNA"/>
</dbReference>
<dbReference type="EMBL" id="AF191653">
    <property type="protein sequence ID" value="AAF68859.1"/>
    <property type="molecule type" value="mRNA"/>
</dbReference>
<dbReference type="EMBL" id="AB007956">
    <property type="protein sequence ID" value="BAE16985.1"/>
    <property type="status" value="ALT_INIT"/>
    <property type="molecule type" value="mRNA"/>
</dbReference>
<dbReference type="EMBL" id="AF067803">
    <property type="protein sequence ID" value="AAF75563.1"/>
    <property type="status" value="ALT_SEQ"/>
    <property type="molecule type" value="mRNA"/>
</dbReference>
<dbReference type="EMBL" id="CR749445">
    <property type="protein sequence ID" value="CAH18283.1"/>
    <property type="molecule type" value="mRNA"/>
</dbReference>
<dbReference type="EMBL" id="BT020109">
    <property type="protein sequence ID" value="AAV38912.1"/>
    <property type="molecule type" value="mRNA"/>
</dbReference>
<dbReference type="EMBL" id="BT020110">
    <property type="protein sequence ID" value="AAV38913.1"/>
    <property type="molecule type" value="mRNA"/>
</dbReference>
<dbReference type="EMBL" id="AK304296">
    <property type="protein sequence ID" value="BAH14152.1"/>
    <property type="molecule type" value="mRNA"/>
</dbReference>
<dbReference type="EMBL" id="AK223497">
    <property type="protein sequence ID" value="BAD97217.1"/>
    <property type="molecule type" value="mRNA"/>
</dbReference>
<dbReference type="EMBL" id="BC012069">
    <property type="protein sequence ID" value="AAH12069.1"/>
    <property type="molecule type" value="mRNA"/>
</dbReference>
<dbReference type="EMBL" id="BC051310">
    <property type="protein sequence ID" value="AAH51310.1"/>
    <property type="molecule type" value="mRNA"/>
</dbReference>
<dbReference type="CCDS" id="CCDS44952.1">
    <molecule id="Q9NZJ9-1"/>
</dbReference>
<dbReference type="CCDS" id="CCDS73504.1">
    <molecule id="Q9NZJ9-3"/>
</dbReference>
<dbReference type="CCDS" id="CCDS9044.1">
    <molecule id="Q9NZJ9-2"/>
</dbReference>
<dbReference type="RefSeq" id="NP_001287951.1">
    <molecule id="Q9NZJ9-3"/>
    <property type="nucleotide sequence ID" value="NM_001301022.2"/>
</dbReference>
<dbReference type="RefSeq" id="NP_001287952.1">
    <property type="nucleotide sequence ID" value="NM_001301023.1"/>
</dbReference>
<dbReference type="RefSeq" id="NP_001287953.1">
    <property type="nucleotide sequence ID" value="NM_001301024.1"/>
</dbReference>
<dbReference type="RefSeq" id="NP_061967.3">
    <molecule id="Q9NZJ9-1"/>
    <property type="nucleotide sequence ID" value="NM_019094.5"/>
</dbReference>
<dbReference type="RefSeq" id="NP_950241.1">
    <molecule id="Q9NZJ9-2"/>
    <property type="nucleotide sequence ID" value="NM_199040.4"/>
</dbReference>
<dbReference type="RefSeq" id="XP_011536096.1">
    <property type="nucleotide sequence ID" value="XM_011537794.2"/>
</dbReference>
<dbReference type="RefSeq" id="XP_011536097.1">
    <property type="nucleotide sequence ID" value="XM_011537795.2"/>
</dbReference>
<dbReference type="RefSeq" id="XP_011536098.1">
    <property type="nucleotide sequence ID" value="XM_011537796.2"/>
</dbReference>
<dbReference type="RefSeq" id="XP_047284091.1">
    <molecule id="Q9NZJ9-3"/>
    <property type="nucleotide sequence ID" value="XM_047428135.1"/>
</dbReference>
<dbReference type="RefSeq" id="XP_047284092.1">
    <molecule id="Q9NZJ9-3"/>
    <property type="nucleotide sequence ID" value="XM_047428136.1"/>
</dbReference>
<dbReference type="RefSeq" id="XP_047284093.1">
    <molecule id="Q9NZJ9-3"/>
    <property type="nucleotide sequence ID" value="XM_047428137.1"/>
</dbReference>
<dbReference type="RefSeq" id="XP_054226836.1">
    <molecule id="Q9NZJ9-3"/>
    <property type="nucleotide sequence ID" value="XM_054370861.1"/>
</dbReference>
<dbReference type="RefSeq" id="XP_054226837.1">
    <molecule id="Q9NZJ9-3"/>
    <property type="nucleotide sequence ID" value="XM_054370862.1"/>
</dbReference>
<dbReference type="RefSeq" id="XP_054226838.1">
    <molecule id="Q9NZJ9-3"/>
    <property type="nucleotide sequence ID" value="XM_054370863.1"/>
</dbReference>
<dbReference type="PDB" id="5LTU">
    <property type="method" value="X-ray"/>
    <property type="resolution" value="2.23 A"/>
    <property type="chains" value="A/B=1-180"/>
</dbReference>
<dbReference type="PDB" id="7NNJ">
    <property type="method" value="X-ray"/>
    <property type="resolution" value="1.75 A"/>
    <property type="chains" value="A/B=9-146"/>
</dbReference>
<dbReference type="PDBsum" id="5LTU"/>
<dbReference type="PDBsum" id="7NNJ"/>
<dbReference type="SMR" id="Q9NZJ9"/>
<dbReference type="BioGRID" id="116334">
    <property type="interactions" value="16"/>
</dbReference>
<dbReference type="FunCoup" id="Q9NZJ9">
    <property type="interactions" value="2175"/>
</dbReference>
<dbReference type="IntAct" id="Q9NZJ9">
    <property type="interactions" value="8"/>
</dbReference>
<dbReference type="MINT" id="Q9NZJ9"/>
<dbReference type="ChEMBL" id="CHEMBL4295967"/>
<dbReference type="iPTMnet" id="Q9NZJ9"/>
<dbReference type="MetOSite" id="Q9NZJ9"/>
<dbReference type="PhosphoSitePlus" id="Q9NZJ9"/>
<dbReference type="BioMuta" id="NUDT4"/>
<dbReference type="DMDM" id="68565946"/>
<dbReference type="jPOST" id="Q9NZJ9"/>
<dbReference type="MassIVE" id="Q9NZJ9"/>
<dbReference type="PeptideAtlas" id="Q9NZJ9"/>
<dbReference type="ProteomicsDB" id="83421">
    <molecule id="Q9NZJ9-1"/>
</dbReference>
<dbReference type="ProteomicsDB" id="83422">
    <molecule id="Q9NZJ9-2"/>
</dbReference>
<dbReference type="ProteomicsDB" id="83423">
    <molecule id="Q9NZJ9-3"/>
</dbReference>
<dbReference type="Pumba" id="Q9NZJ9"/>
<dbReference type="TopDownProteomics" id="Q9NZJ9-2">
    <molecule id="Q9NZJ9-2"/>
</dbReference>
<dbReference type="Antibodypedia" id="17488">
    <property type="antibodies" value="89 antibodies from 20 providers"/>
</dbReference>
<dbReference type="DNASU" id="11163"/>
<dbReference type="Ensembl" id="ENST00000337179.9">
    <molecule id="Q9NZJ9-2"/>
    <property type="protein sequence ID" value="ENSP00000338352.5"/>
    <property type="gene ID" value="ENSG00000173598.14"/>
</dbReference>
<dbReference type="Ensembl" id="ENST00000415493.7">
    <molecule id="Q9NZJ9-1"/>
    <property type="protein sequence ID" value="ENSP00000406612.2"/>
    <property type="gene ID" value="ENSG00000173598.14"/>
</dbReference>
<dbReference type="Ensembl" id="ENST00000547014.5">
    <molecule id="Q9NZJ9-3"/>
    <property type="protein sequence ID" value="ENSP00000448032.1"/>
    <property type="gene ID" value="ENSG00000173598.14"/>
</dbReference>
<dbReference type="GeneID" id="11163"/>
<dbReference type="KEGG" id="hsa:11163"/>
<dbReference type="MANE-Select" id="ENST00000415493.7">
    <property type="protein sequence ID" value="ENSP00000406612.2"/>
    <property type="RefSeq nucleotide sequence ID" value="NM_019094.6"/>
    <property type="RefSeq protein sequence ID" value="NP_061967.3"/>
</dbReference>
<dbReference type="UCSC" id="uc001tcm.4">
    <molecule id="Q9NZJ9-1"/>
    <property type="organism name" value="human"/>
</dbReference>
<dbReference type="AGR" id="HGNC:8051"/>
<dbReference type="CTD" id="11163"/>
<dbReference type="DisGeNET" id="11163"/>
<dbReference type="GeneCards" id="NUDT4"/>
<dbReference type="HGNC" id="HGNC:8051">
    <property type="gene designation" value="NUDT4"/>
</dbReference>
<dbReference type="HPA" id="ENSG00000173598">
    <property type="expression patterns" value="Low tissue specificity"/>
</dbReference>
<dbReference type="MIM" id="609229">
    <property type="type" value="gene"/>
</dbReference>
<dbReference type="neXtProt" id="NX_Q9NZJ9"/>
<dbReference type="OpenTargets" id="ENSG00000173598"/>
<dbReference type="PharmGKB" id="PA31835"/>
<dbReference type="VEuPathDB" id="HostDB:ENSG00000173598"/>
<dbReference type="eggNOG" id="KOG2839">
    <property type="taxonomic scope" value="Eukaryota"/>
</dbReference>
<dbReference type="GeneTree" id="ENSGT00940000155210"/>
<dbReference type="HOGENOM" id="CLU_037162_1_0_1"/>
<dbReference type="InParanoid" id="Q9NZJ9"/>
<dbReference type="OMA" id="NTCNPTC"/>
<dbReference type="OrthoDB" id="2011998at2759"/>
<dbReference type="PAN-GO" id="Q9NZJ9">
    <property type="GO annotations" value="11 GO annotations based on evolutionary models"/>
</dbReference>
<dbReference type="PhylomeDB" id="Q9NZJ9"/>
<dbReference type="TreeFam" id="TF106349"/>
<dbReference type="BioCyc" id="MetaCyc:HS10696-MONOMER"/>
<dbReference type="PathwayCommons" id="Q9NZJ9"/>
<dbReference type="Reactome" id="R-HSA-1855167">
    <property type="pathway name" value="Synthesis of pyrophosphates in the cytosol"/>
</dbReference>
<dbReference type="SABIO-RK" id="Q9NZJ9"/>
<dbReference type="SignaLink" id="Q9NZJ9"/>
<dbReference type="BioGRID-ORCS" id="11163">
    <property type="hits" value="574 hits in 1156 CRISPR screens"/>
</dbReference>
<dbReference type="ChiTaRS" id="NUDT4">
    <property type="organism name" value="human"/>
</dbReference>
<dbReference type="GeneWiki" id="NUDT4"/>
<dbReference type="GenomeRNAi" id="11163"/>
<dbReference type="Pharos" id="Q9NZJ9">
    <property type="development level" value="Tbio"/>
</dbReference>
<dbReference type="PRO" id="PR:Q9NZJ9"/>
<dbReference type="Proteomes" id="UP000005640">
    <property type="component" value="Chromosome 12"/>
</dbReference>
<dbReference type="RNAct" id="Q9NZJ9">
    <property type="molecule type" value="protein"/>
</dbReference>
<dbReference type="Bgee" id="ENSG00000173598">
    <property type="expression patterns" value="Expressed in heart right ventricle and 212 other cell types or tissues"/>
</dbReference>
<dbReference type="ExpressionAtlas" id="Q9NZJ9">
    <property type="expression patterns" value="baseline and differential"/>
</dbReference>
<dbReference type="GO" id="GO:0005737">
    <property type="term" value="C:cytoplasm"/>
    <property type="evidence" value="ECO:0000318"/>
    <property type="project" value="GO_Central"/>
</dbReference>
<dbReference type="GO" id="GO:0005829">
    <property type="term" value="C:cytosol"/>
    <property type="evidence" value="ECO:0000314"/>
    <property type="project" value="HPA"/>
</dbReference>
<dbReference type="GO" id="GO:0005634">
    <property type="term" value="C:nucleus"/>
    <property type="evidence" value="ECO:0000318"/>
    <property type="project" value="GO_Central"/>
</dbReference>
<dbReference type="GO" id="GO:0034431">
    <property type="term" value="F:bis(5'-adenosyl)-hexaphosphatase activity"/>
    <property type="evidence" value="ECO:0000318"/>
    <property type="project" value="GO_Central"/>
</dbReference>
<dbReference type="GO" id="GO:0034432">
    <property type="term" value="F:bis(5'-adenosyl)-pentaphosphatase activity"/>
    <property type="evidence" value="ECO:0000318"/>
    <property type="project" value="GO_Central"/>
</dbReference>
<dbReference type="GO" id="GO:0008486">
    <property type="term" value="F:diphosphoinositol-polyphosphate diphosphatase activity"/>
    <property type="evidence" value="ECO:0000314"/>
    <property type="project" value="UniProtKB"/>
</dbReference>
<dbReference type="GO" id="GO:0000298">
    <property type="term" value="F:endopolyphosphatase activity"/>
    <property type="evidence" value="ECO:0000318"/>
    <property type="project" value="GO_Central"/>
</dbReference>
<dbReference type="GO" id="GO:0052848">
    <property type="term" value="F:inositol-3,5-bisdiphosphate-2,3,4,6-tetrakisphosphate 5-diphosphatase activity"/>
    <property type="evidence" value="ECO:0007669"/>
    <property type="project" value="RHEA"/>
</dbReference>
<dbReference type="GO" id="GO:0052845">
    <property type="term" value="F:inositol-5-diphosphate-1,2,3,4,6-pentakisphosphate diphosphatase activity"/>
    <property type="evidence" value="ECO:0007669"/>
    <property type="project" value="RHEA"/>
</dbReference>
<dbReference type="GO" id="GO:0106211">
    <property type="term" value="F:inositol-5-diphosphate-1,3,4,6-tetrakisphosphate diphosphatase activity"/>
    <property type="evidence" value="ECO:0007669"/>
    <property type="project" value="RHEA"/>
</dbReference>
<dbReference type="GO" id="GO:0046872">
    <property type="term" value="F:metal ion binding"/>
    <property type="evidence" value="ECO:0007669"/>
    <property type="project" value="UniProtKB-KW"/>
</dbReference>
<dbReference type="GO" id="GO:0030515">
    <property type="term" value="F:snoRNA binding"/>
    <property type="evidence" value="ECO:0000250"/>
    <property type="project" value="UniProtKB"/>
</dbReference>
<dbReference type="GO" id="GO:1901911">
    <property type="term" value="P:adenosine 5'-(hexahydrogen pentaphosphate) catabolic process"/>
    <property type="evidence" value="ECO:0000318"/>
    <property type="project" value="GO_Central"/>
</dbReference>
<dbReference type="GO" id="GO:0019722">
    <property type="term" value="P:calcium-mediated signaling"/>
    <property type="evidence" value="ECO:0000304"/>
    <property type="project" value="UniProtKB"/>
</dbReference>
<dbReference type="GO" id="GO:1901909">
    <property type="term" value="P:diadenosine hexaphosphate catabolic process"/>
    <property type="evidence" value="ECO:0000318"/>
    <property type="project" value="GO_Central"/>
</dbReference>
<dbReference type="GO" id="GO:1901907">
    <property type="term" value="P:diadenosine pentaphosphate catabolic process"/>
    <property type="evidence" value="ECO:0000318"/>
    <property type="project" value="GO_Central"/>
</dbReference>
<dbReference type="GO" id="GO:0071543">
    <property type="term" value="P:diphosphoinositol polyphosphate metabolic process"/>
    <property type="evidence" value="ECO:0000318"/>
    <property type="project" value="GO_Central"/>
</dbReference>
<dbReference type="GO" id="GO:0035556">
    <property type="term" value="P:intracellular signal transduction"/>
    <property type="evidence" value="ECO:0000303"/>
    <property type="project" value="UniProtKB"/>
</dbReference>
<dbReference type="CDD" id="cd04666">
    <property type="entry name" value="NUDIX_DIPP2_like_Nudt4"/>
    <property type="match status" value="1"/>
</dbReference>
<dbReference type="FunFam" id="3.90.79.10:FF:000002">
    <property type="entry name" value="diphosphoinositol polyphosphate phosphohydrolase 1"/>
    <property type="match status" value="1"/>
</dbReference>
<dbReference type="Gene3D" id="3.90.79.10">
    <property type="entry name" value="Nucleoside Triphosphate Pyrophosphohydrolase"/>
    <property type="match status" value="1"/>
</dbReference>
<dbReference type="InterPro" id="IPR047198">
    <property type="entry name" value="DDP-like_NUDIX"/>
</dbReference>
<dbReference type="InterPro" id="IPR015797">
    <property type="entry name" value="NUDIX_hydrolase-like_dom_sf"/>
</dbReference>
<dbReference type="InterPro" id="IPR020084">
    <property type="entry name" value="NUDIX_hydrolase_CS"/>
</dbReference>
<dbReference type="InterPro" id="IPR000086">
    <property type="entry name" value="NUDIX_hydrolase_dom"/>
</dbReference>
<dbReference type="PANTHER" id="PTHR12629">
    <property type="entry name" value="DIPHOSPHOINOSITOL POLYPHOSPHATE PHOSPHOHYDROLASE"/>
    <property type="match status" value="1"/>
</dbReference>
<dbReference type="PANTHER" id="PTHR12629:SF6">
    <property type="entry name" value="DIPHOSPHOINOSITOL POLYPHOSPHATE PHOSPHOHYDROLASE 2-RELATED"/>
    <property type="match status" value="1"/>
</dbReference>
<dbReference type="Pfam" id="PF00293">
    <property type="entry name" value="NUDIX"/>
    <property type="match status" value="1"/>
</dbReference>
<dbReference type="SUPFAM" id="SSF55811">
    <property type="entry name" value="Nudix"/>
    <property type="match status" value="1"/>
</dbReference>
<dbReference type="PROSITE" id="PS51462">
    <property type="entry name" value="NUDIX"/>
    <property type="match status" value="1"/>
</dbReference>
<dbReference type="PROSITE" id="PS00893">
    <property type="entry name" value="NUDIX_BOX"/>
    <property type="match status" value="1"/>
</dbReference>
<keyword id="KW-0002">3D-structure</keyword>
<keyword id="KW-0007">Acetylation</keyword>
<keyword id="KW-0025">Alternative splicing</keyword>
<keyword id="KW-0963">Cytoplasm</keyword>
<keyword id="KW-0378">Hydrolase</keyword>
<keyword id="KW-0460">Magnesium</keyword>
<keyword id="KW-0464">Manganese</keyword>
<keyword id="KW-0479">Metal-binding</keyword>
<keyword id="KW-1267">Proteomics identification</keyword>
<keyword id="KW-1185">Reference proteome</keyword>
<keyword id="KW-0694">RNA-binding</keyword>
<reference key="1">
    <citation type="journal article" date="2000" name="J. Biol. Chem.">
        <title>Discovery of molecular and catalytic diversity among human diphosphoinositol-polyphosphate phosphohydrolases. The expanding NUDT family.</title>
        <authorList>
            <person name="Caffrey J.J."/>
            <person name="Safrany S.T."/>
            <person name="Yang X."/>
            <person name="Shears S.B."/>
        </authorList>
    </citation>
    <scope>NUCLEOTIDE SEQUENCE [MRNA] (ISOFORMS 1 AND 2)</scope>
    <scope>FUNCTION</scope>
    <scope>CATALYTIC ACTIVITY</scope>
    <scope>BIOPHYSICOCHEMICAL PROPERTIES</scope>
    <scope>TISSUE SPECIFICITY</scope>
    <source>
        <tissue>Cerebellum</tissue>
    </source>
</reference>
<reference key="2">
    <citation type="journal article" date="1997" name="DNA Res.">
        <title>Characterization of cDNA clones in size-fractionated cDNA libraries from human brain.</title>
        <authorList>
            <person name="Seki N."/>
            <person name="Ohira M."/>
            <person name="Nagase T."/>
            <person name="Ishikawa K."/>
            <person name="Miyajima N."/>
            <person name="Nakajima D."/>
            <person name="Nomura N."/>
            <person name="Ohara O."/>
        </authorList>
    </citation>
    <scope>NUCLEOTIDE SEQUENCE [LARGE SCALE MRNA] (ISOFORM 1)</scope>
    <source>
        <tissue>Brain</tissue>
    </source>
</reference>
<reference key="3">
    <citation type="submission" date="1998-05" db="EMBL/GenBank/DDBJ databases">
        <title>Novel gene identified from dendritic cells.</title>
        <authorList>
            <person name="Zhao Z."/>
            <person name="Huang X."/>
            <person name="Li N."/>
            <person name="Zhu X."/>
            <person name="Cao X."/>
        </authorList>
    </citation>
    <scope>NUCLEOTIDE SEQUENCE [LARGE SCALE MRNA] (ISOFORM 3)</scope>
</reference>
<reference key="4">
    <citation type="journal article" date="2007" name="BMC Genomics">
        <title>The full-ORF clone resource of the German cDNA consortium.</title>
        <authorList>
            <person name="Bechtel S."/>
            <person name="Rosenfelder H."/>
            <person name="Duda A."/>
            <person name="Schmidt C.P."/>
            <person name="Ernst U."/>
            <person name="Wellenreuther R."/>
            <person name="Mehrle A."/>
            <person name="Schuster C."/>
            <person name="Bahr A."/>
            <person name="Bloecker H."/>
            <person name="Heubner D."/>
            <person name="Hoerlein A."/>
            <person name="Michel G."/>
            <person name="Wedler H."/>
            <person name="Koehrer K."/>
            <person name="Ottenwaelder B."/>
            <person name="Poustka A."/>
            <person name="Wiemann S."/>
            <person name="Schupp I."/>
        </authorList>
    </citation>
    <scope>NUCLEOTIDE SEQUENCE [LARGE SCALE MRNA] (ISOFORM 3)</scope>
    <source>
        <tissue>Retina</tissue>
    </source>
</reference>
<reference key="5">
    <citation type="submission" date="2004-10" db="EMBL/GenBank/DDBJ databases">
        <title>Cloning of human full-length CDSs in BD Creator(TM) system donor vector.</title>
        <authorList>
            <person name="Kalnine N."/>
            <person name="Chen X."/>
            <person name="Rolfs A."/>
            <person name="Halleck A."/>
            <person name="Hines L."/>
            <person name="Eisenstein S."/>
            <person name="Koundinya M."/>
            <person name="Raphael J."/>
            <person name="Moreira D."/>
            <person name="Kelley T."/>
            <person name="LaBaer J."/>
            <person name="Lin Y."/>
            <person name="Phelan M."/>
            <person name="Farmer A."/>
        </authorList>
    </citation>
    <scope>NUCLEOTIDE SEQUENCE [LARGE SCALE MRNA] (ISOFORMS 1 AND 2)</scope>
</reference>
<reference key="6">
    <citation type="journal article" date="2004" name="Nat. Genet.">
        <title>Complete sequencing and characterization of 21,243 full-length human cDNAs.</title>
        <authorList>
            <person name="Ota T."/>
            <person name="Suzuki Y."/>
            <person name="Nishikawa T."/>
            <person name="Otsuki T."/>
            <person name="Sugiyama T."/>
            <person name="Irie R."/>
            <person name="Wakamatsu A."/>
            <person name="Hayashi K."/>
            <person name="Sato H."/>
            <person name="Nagai K."/>
            <person name="Kimura K."/>
            <person name="Makita H."/>
            <person name="Sekine M."/>
            <person name="Obayashi M."/>
            <person name="Nishi T."/>
            <person name="Shibahara T."/>
            <person name="Tanaka T."/>
            <person name="Ishii S."/>
            <person name="Yamamoto J."/>
            <person name="Saito K."/>
            <person name="Kawai Y."/>
            <person name="Isono Y."/>
            <person name="Nakamura Y."/>
            <person name="Nagahari K."/>
            <person name="Murakami K."/>
            <person name="Yasuda T."/>
            <person name="Iwayanagi T."/>
            <person name="Wagatsuma M."/>
            <person name="Shiratori A."/>
            <person name="Sudo H."/>
            <person name="Hosoiri T."/>
            <person name="Kaku Y."/>
            <person name="Kodaira H."/>
            <person name="Kondo H."/>
            <person name="Sugawara M."/>
            <person name="Takahashi M."/>
            <person name="Kanda K."/>
            <person name="Yokoi T."/>
            <person name="Furuya T."/>
            <person name="Kikkawa E."/>
            <person name="Omura Y."/>
            <person name="Abe K."/>
            <person name="Kamihara K."/>
            <person name="Katsuta N."/>
            <person name="Sato K."/>
            <person name="Tanikawa M."/>
            <person name="Yamazaki M."/>
            <person name="Ninomiya K."/>
            <person name="Ishibashi T."/>
            <person name="Yamashita H."/>
            <person name="Murakawa K."/>
            <person name="Fujimori K."/>
            <person name="Tanai H."/>
            <person name="Kimata M."/>
            <person name="Watanabe M."/>
            <person name="Hiraoka S."/>
            <person name="Chiba Y."/>
            <person name="Ishida S."/>
            <person name="Ono Y."/>
            <person name="Takiguchi S."/>
            <person name="Watanabe S."/>
            <person name="Yosida M."/>
            <person name="Hotuta T."/>
            <person name="Kusano J."/>
            <person name="Kanehori K."/>
            <person name="Takahashi-Fujii A."/>
            <person name="Hara H."/>
            <person name="Tanase T.-O."/>
            <person name="Nomura Y."/>
            <person name="Togiya S."/>
            <person name="Komai F."/>
            <person name="Hara R."/>
            <person name="Takeuchi K."/>
            <person name="Arita M."/>
            <person name="Imose N."/>
            <person name="Musashino K."/>
            <person name="Yuuki H."/>
            <person name="Oshima A."/>
            <person name="Sasaki N."/>
            <person name="Aotsuka S."/>
            <person name="Yoshikawa Y."/>
            <person name="Matsunawa H."/>
            <person name="Ichihara T."/>
            <person name="Shiohata N."/>
            <person name="Sano S."/>
            <person name="Moriya S."/>
            <person name="Momiyama H."/>
            <person name="Satoh N."/>
            <person name="Takami S."/>
            <person name="Terashima Y."/>
            <person name="Suzuki O."/>
            <person name="Nakagawa S."/>
            <person name="Senoh A."/>
            <person name="Mizoguchi H."/>
            <person name="Goto Y."/>
            <person name="Shimizu F."/>
            <person name="Wakebe H."/>
            <person name="Hishigaki H."/>
            <person name="Watanabe T."/>
            <person name="Sugiyama A."/>
            <person name="Takemoto M."/>
            <person name="Kawakami B."/>
            <person name="Yamazaki M."/>
            <person name="Watanabe K."/>
            <person name="Kumagai A."/>
            <person name="Itakura S."/>
            <person name="Fukuzumi Y."/>
            <person name="Fujimori Y."/>
            <person name="Komiyama M."/>
            <person name="Tashiro H."/>
            <person name="Tanigami A."/>
            <person name="Fujiwara T."/>
            <person name="Ono T."/>
            <person name="Yamada K."/>
            <person name="Fujii Y."/>
            <person name="Ozaki K."/>
            <person name="Hirao M."/>
            <person name="Ohmori Y."/>
            <person name="Kawabata A."/>
            <person name="Hikiji T."/>
            <person name="Kobatake N."/>
            <person name="Inagaki H."/>
            <person name="Ikema Y."/>
            <person name="Okamoto S."/>
            <person name="Okitani R."/>
            <person name="Kawakami T."/>
            <person name="Noguchi S."/>
            <person name="Itoh T."/>
            <person name="Shigeta K."/>
            <person name="Senba T."/>
            <person name="Matsumura K."/>
            <person name="Nakajima Y."/>
            <person name="Mizuno T."/>
            <person name="Morinaga M."/>
            <person name="Sasaki M."/>
            <person name="Togashi T."/>
            <person name="Oyama M."/>
            <person name="Hata H."/>
            <person name="Watanabe M."/>
            <person name="Komatsu T."/>
            <person name="Mizushima-Sugano J."/>
            <person name="Satoh T."/>
            <person name="Shirai Y."/>
            <person name="Takahashi Y."/>
            <person name="Nakagawa K."/>
            <person name="Okumura K."/>
            <person name="Nagase T."/>
            <person name="Nomura N."/>
            <person name="Kikuchi H."/>
            <person name="Masuho Y."/>
            <person name="Yamashita R."/>
            <person name="Nakai K."/>
            <person name="Yada T."/>
            <person name="Nakamura Y."/>
            <person name="Ohara O."/>
            <person name="Isogai T."/>
            <person name="Sugano S."/>
        </authorList>
    </citation>
    <scope>NUCLEOTIDE SEQUENCE [LARGE SCALE MRNA] (ISOFORM 3)</scope>
    <source>
        <tissue>Trachea</tissue>
    </source>
</reference>
<reference key="7">
    <citation type="submission" date="2005-04" db="EMBL/GenBank/DDBJ databases">
        <authorList>
            <person name="Totoki Y."/>
            <person name="Toyoda A."/>
            <person name="Takeda T."/>
            <person name="Sakaki Y."/>
            <person name="Tanaka A."/>
            <person name="Yokoyama S."/>
        </authorList>
    </citation>
    <scope>NUCLEOTIDE SEQUENCE [LARGE SCALE MRNA] (ISOFORM 1)</scope>
</reference>
<reference key="8">
    <citation type="journal article" date="2004" name="Genome Res.">
        <title>The status, quality, and expansion of the NIH full-length cDNA project: the Mammalian Gene Collection (MGC).</title>
        <authorList>
            <consortium name="The MGC Project Team"/>
        </authorList>
    </citation>
    <scope>NUCLEOTIDE SEQUENCE [LARGE SCALE MRNA] (ISOFORMS 1 AND 2)</scope>
    <source>
        <tissue>Lymph</tissue>
        <tissue>Placenta</tissue>
    </source>
</reference>
<reference key="9">
    <citation type="journal article" date="2002" name="BMC Biochem.">
        <title>Cloning and characterisation of hAps1 and hAps2, human diadenosine polyphosphate-metabolising Nudix hydrolases.</title>
        <authorList>
            <person name="Leslie N.R."/>
            <person name="McLennan A.G."/>
            <person name="Safrany S.T."/>
        </authorList>
    </citation>
    <scope>SUBCELLULAR LOCATION</scope>
</reference>
<reference key="10">
    <citation type="journal article" date="2002" name="J. Biol. Chem.">
        <title>Nudix hydrolases that degrade dinucleoside and diphosphoinositol polyphosphates also have 5-phosphoribosyl 1-pyrophosphate (PRPP) pyrophosphatase activity that generates the glycolytic activator ribose 1,5-bisphosphate.</title>
        <authorList>
            <person name="Fisher D.I."/>
            <person name="Safrany S.T."/>
            <person name="Strike P."/>
            <person name="McLennan A.G."/>
            <person name="Cartwright J.L."/>
        </authorList>
    </citation>
    <scope>FUNCTION</scope>
    <scope>CATALYTIC ACTIVITY</scope>
</reference>
<reference key="11">
    <citation type="journal article" date="2011" name="BMC Syst. Biol.">
        <title>Initial characterization of the human central proteome.</title>
        <authorList>
            <person name="Burkard T.R."/>
            <person name="Planyavsky M."/>
            <person name="Kaupe I."/>
            <person name="Breitwieser F.P."/>
            <person name="Buerckstuemmer T."/>
            <person name="Bennett K.L."/>
            <person name="Superti-Furga G."/>
            <person name="Colinge J."/>
        </authorList>
    </citation>
    <scope>IDENTIFICATION BY MASS SPECTROMETRY [LARGE SCALE ANALYSIS]</scope>
</reference>
<reference key="12">
    <citation type="journal article" date="2012" name="Proc. Natl. Acad. Sci. U.S.A.">
        <title>N-terminal acetylome analyses and functional insights of the N-terminal acetyltransferase NatB.</title>
        <authorList>
            <person name="Van Damme P."/>
            <person name="Lasa M."/>
            <person name="Polevoda B."/>
            <person name="Gazquez C."/>
            <person name="Elosegui-Artola A."/>
            <person name="Kim D.S."/>
            <person name="De Juan-Pardo E."/>
            <person name="Demeyer K."/>
            <person name="Hole K."/>
            <person name="Larrea E."/>
            <person name="Timmerman E."/>
            <person name="Prieto J."/>
            <person name="Arnesen T."/>
            <person name="Sherman F."/>
            <person name="Gevaert K."/>
            <person name="Aldabe R."/>
        </authorList>
    </citation>
    <scope>ACETYLATION [LARGE SCALE ANALYSIS] AT MET-1</scope>
    <scope>IDENTIFICATION BY MASS SPECTROMETRY [LARGE SCALE ANALYSIS]</scope>
</reference>
<reference evidence="19" key="13">
    <citation type="submission" date="2016-09" db="PDB data bank">
        <title>Crystal Structure of Human NUDT4A- Diphosphoinositol polyphosphate phosphohydrolase 2.</title>
        <authorList>
            <person name="Srikannathasan V."/>
            <person name="Huber K."/>
        </authorList>
    </citation>
    <scope>X-RAY CRYSTALLOGRAPHY (2.23 ANGSTROMS)</scope>
</reference>
<sequence>MMKFKPNQTRTYDREGFKKRAACLCFRSEQEDEVLLVSSSRYPDQWIVPGGGMEPEEEPGGAAVREVYEEAGVKGKLGRLLGIFENQDRKHRTYVYVLTVTEILEDWEDSVNIGRKREWFKVEDAIKVLQCHKPVHAEYLEKLKLGCSPANGNSTVPSLPDNNALFVTAAQTSGLPSSVR</sequence>
<comment type="function">
    <text evidence="3 6 8">Cleaves the beta-phosphate from diphosphoinositol polyphosphates such as PP-InsP5 (diphosphoinositol pentakisphosphate), PP-InsP4 (diphosphoinositol tetrakisphosphate) and [PP]2-InsP4 (bisdiphosphoinositol tetrakisphosphate), suggesting that it may play a role in signal transduction (PubMed:10777568). Diadenosine polyphosphates, particularly Ap6A (P(1),P(6)-bis(5a-adenosyl) hexaphosphate) and Ap5A (P(1),P(5)-bis(5'-adenosyl) pentaphosphate) are downstream effectors of a signaling cascade that regulates cardiac KATP channels, can also be substrates, although with lower preference than the diphosphoinositol polyphosphates (PubMed:10777568). Can also catalyze the hydrolysis of 5-phosphoribose 1-diphosphate, generating the glycolytic activator ribose 1,5-bisphosphate (PubMed:12370170). Does not play a role in U8 snoRNA decapping activity (By similarity). Binds U8 snoRNA (By similarity).</text>
</comment>
<comment type="catalytic activity">
    <reaction evidence="6">
        <text>diphospho-myo-inositol polyphosphate + H2O = myo-inositol polyphosphate + phosphate.</text>
        <dbReference type="EC" id="3.6.1.52"/>
    </reaction>
</comment>
<comment type="catalytic activity">
    <molecule>Isoform 1</molecule>
    <reaction evidence="6">
        <text>5-diphospho-1D-myo-inositol 1,2,3,4,6-pentakisphosphate + H2O = 1D-myo-inositol hexakisphosphate + phosphate + H(+)</text>
        <dbReference type="Rhea" id="RHEA:22384"/>
        <dbReference type="ChEBI" id="CHEBI:15377"/>
        <dbReference type="ChEBI" id="CHEBI:15378"/>
        <dbReference type="ChEBI" id="CHEBI:43474"/>
        <dbReference type="ChEBI" id="CHEBI:58130"/>
        <dbReference type="ChEBI" id="CHEBI:58628"/>
        <dbReference type="EC" id="3.6.1.52"/>
    </reaction>
    <physiologicalReaction direction="left-to-right" evidence="16">
        <dbReference type="Rhea" id="RHEA:22385"/>
    </physiologicalReaction>
</comment>
<comment type="catalytic activity">
    <molecule>Isoform 2</molecule>
    <reaction evidence="6">
        <text>5-diphospho-1D-myo-inositol 1,2,3,4,6-pentakisphosphate + H2O = 1D-myo-inositol hexakisphosphate + phosphate + H(+)</text>
        <dbReference type="Rhea" id="RHEA:22384"/>
        <dbReference type="ChEBI" id="CHEBI:15377"/>
        <dbReference type="ChEBI" id="CHEBI:15378"/>
        <dbReference type="ChEBI" id="CHEBI:43474"/>
        <dbReference type="ChEBI" id="CHEBI:58130"/>
        <dbReference type="ChEBI" id="CHEBI:58628"/>
        <dbReference type="EC" id="3.6.1.52"/>
    </reaction>
    <physiologicalReaction direction="left-to-right" evidence="16">
        <dbReference type="Rhea" id="RHEA:22385"/>
    </physiologicalReaction>
</comment>
<comment type="catalytic activity">
    <molecule>Isoform 1</molecule>
    <reaction evidence="6">
        <text>3,5-bis(diphospho)-1D-myo-inositol 1,2,4,6-tetrakisphosphate + H2O = 3-diphospho-1D-myo-inositol 1,2,4,5,6-pentakisphosphate + phosphate + 2 H(+)</text>
        <dbReference type="Rhea" id="RHEA:56312"/>
        <dbReference type="ChEBI" id="CHEBI:15377"/>
        <dbReference type="ChEBI" id="CHEBI:15378"/>
        <dbReference type="ChEBI" id="CHEBI:43474"/>
        <dbReference type="ChEBI" id="CHEBI:140372"/>
        <dbReference type="ChEBI" id="CHEBI:140374"/>
        <dbReference type="EC" id="3.6.1.52"/>
    </reaction>
    <physiologicalReaction direction="left-to-right" evidence="16">
        <dbReference type="Rhea" id="RHEA:56313"/>
    </physiologicalReaction>
</comment>
<comment type="catalytic activity">
    <molecule>Isoform 2</molecule>
    <reaction evidence="6">
        <text>3,5-bis(diphospho)-1D-myo-inositol 1,2,4,6-tetrakisphosphate + H2O = 3-diphospho-1D-myo-inositol 1,2,4,5,6-pentakisphosphate + phosphate + 2 H(+)</text>
        <dbReference type="Rhea" id="RHEA:56312"/>
        <dbReference type="ChEBI" id="CHEBI:15377"/>
        <dbReference type="ChEBI" id="CHEBI:15378"/>
        <dbReference type="ChEBI" id="CHEBI:43474"/>
        <dbReference type="ChEBI" id="CHEBI:140372"/>
        <dbReference type="ChEBI" id="CHEBI:140374"/>
        <dbReference type="EC" id="3.6.1.52"/>
    </reaction>
    <physiologicalReaction direction="left-to-right" evidence="16">
        <dbReference type="Rhea" id="RHEA:56313"/>
    </physiologicalReaction>
</comment>
<comment type="catalytic activity">
    <molecule>Isoform 1</molecule>
    <reaction evidence="6">
        <text>5-diphospho-1D-myo-inositol 1,3,4,6-tetrakisphosphate + H2O = 1D-myo-inositol 1,3,4,5,6-pentakisphosphate + phosphate + H(+)</text>
        <dbReference type="Rhea" id="RHEA:59500"/>
        <dbReference type="ChEBI" id="CHEBI:15377"/>
        <dbReference type="ChEBI" id="CHEBI:15378"/>
        <dbReference type="ChEBI" id="CHEBI:43474"/>
        <dbReference type="ChEBI" id="CHEBI:57733"/>
        <dbReference type="ChEBI" id="CHEBI:142939"/>
        <dbReference type="EC" id="3.6.1.52"/>
    </reaction>
    <physiologicalReaction direction="left-to-right" evidence="16">
        <dbReference type="Rhea" id="RHEA:59501"/>
    </physiologicalReaction>
</comment>
<comment type="catalytic activity">
    <molecule>Isoform 2</molecule>
    <reaction evidence="6">
        <text>5-diphospho-1D-myo-inositol 1,3,4,6-tetrakisphosphate + H2O = 1D-myo-inositol 1,3,4,5,6-pentakisphosphate + phosphate + H(+)</text>
        <dbReference type="Rhea" id="RHEA:59500"/>
        <dbReference type="ChEBI" id="CHEBI:15377"/>
        <dbReference type="ChEBI" id="CHEBI:15378"/>
        <dbReference type="ChEBI" id="CHEBI:43474"/>
        <dbReference type="ChEBI" id="CHEBI:57733"/>
        <dbReference type="ChEBI" id="CHEBI:142939"/>
        <dbReference type="EC" id="3.6.1.52"/>
    </reaction>
    <physiologicalReaction direction="left-to-right" evidence="16">
        <dbReference type="Rhea" id="RHEA:59501"/>
    </physiologicalReaction>
</comment>
<comment type="catalytic activity">
    <molecule>Isoform 1</molecule>
    <reaction evidence="6">
        <text>P(1),P(6)-bis(5'-adenosyl) hexaphosphate + H2O = 2 ATP + 2 H(+)</text>
        <dbReference type="Rhea" id="RHEA:32043"/>
        <dbReference type="ChEBI" id="CHEBI:15377"/>
        <dbReference type="ChEBI" id="CHEBI:15378"/>
        <dbReference type="ChEBI" id="CHEBI:30616"/>
        <dbReference type="ChEBI" id="CHEBI:63740"/>
        <dbReference type="EC" id="3.6.1.61"/>
    </reaction>
    <physiologicalReaction direction="left-to-right" evidence="16">
        <dbReference type="Rhea" id="RHEA:32044"/>
    </physiologicalReaction>
</comment>
<comment type="catalytic activity">
    <molecule>Isoform 2</molecule>
    <reaction evidence="6">
        <text>P(1),P(6)-bis(5'-adenosyl) hexaphosphate + H2O = 2 ATP + 2 H(+)</text>
        <dbReference type="Rhea" id="RHEA:32043"/>
        <dbReference type="ChEBI" id="CHEBI:15377"/>
        <dbReference type="ChEBI" id="CHEBI:15378"/>
        <dbReference type="ChEBI" id="CHEBI:30616"/>
        <dbReference type="ChEBI" id="CHEBI:63740"/>
        <dbReference type="EC" id="3.6.1.61"/>
    </reaction>
    <physiologicalReaction direction="left-to-right" evidence="16">
        <dbReference type="Rhea" id="RHEA:32044"/>
    </physiologicalReaction>
</comment>
<comment type="catalytic activity">
    <molecule>Isoform 2</molecule>
    <reaction evidence="6">
        <text>P(1),P(5)-bis(5'-adenosyl) pentaphosphate + H2O = ADP + ATP + 2 H(+)</text>
        <dbReference type="Rhea" id="RHEA:30527"/>
        <dbReference type="ChEBI" id="CHEBI:15377"/>
        <dbReference type="ChEBI" id="CHEBI:15378"/>
        <dbReference type="ChEBI" id="CHEBI:30616"/>
        <dbReference type="ChEBI" id="CHEBI:62041"/>
        <dbReference type="ChEBI" id="CHEBI:456216"/>
        <dbReference type="EC" id="3.6.1.61"/>
    </reaction>
    <physiologicalReaction direction="left-to-right" evidence="16">
        <dbReference type="Rhea" id="RHEA:30528"/>
    </physiologicalReaction>
</comment>
<comment type="catalytic activity">
    <reaction evidence="8">
        <text>5-phospho-alpha-D-ribose 1-diphosphate + H2O = alpha-D-ribose 1,5-bisphosphate + phosphate + H(+)</text>
        <dbReference type="Rhea" id="RHEA:80811"/>
        <dbReference type="ChEBI" id="CHEBI:15377"/>
        <dbReference type="ChEBI" id="CHEBI:15378"/>
        <dbReference type="ChEBI" id="CHEBI:43474"/>
        <dbReference type="ChEBI" id="CHEBI:58017"/>
        <dbReference type="ChEBI" id="CHEBI:68688"/>
    </reaction>
    <physiologicalReaction direction="left-to-right" evidence="17">
        <dbReference type="Rhea" id="RHEA:80812"/>
    </physiologicalReaction>
</comment>
<comment type="cofactor">
    <cofactor evidence="4">
        <name>Mg(2+)</name>
        <dbReference type="ChEBI" id="CHEBI:18420"/>
    </cofactor>
    <cofactor evidence="4">
        <name>Mn(2+)</name>
        <dbReference type="ChEBI" id="CHEBI:29035"/>
    </cofactor>
    <text evidence="4">Binds 3 Mg(2+) or Mn(2+) ions per subunit.</text>
</comment>
<comment type="biophysicochemical properties">
    <molecule>Isoform 1</molecule>
    <kinetics>
        <KM evidence="6">4.2 nM for PP-InsP5</KM>
    </kinetics>
</comment>
<comment type="biophysicochemical properties">
    <molecule>Isoform 2</molecule>
    <kinetics>
        <KM evidence="6">4.8 nM for PP-InsP5</KM>
    </kinetics>
</comment>
<comment type="interaction">
    <interactant intactId="EBI-4280066">
        <id>Q9NZJ9</id>
    </interactant>
    <interactant intactId="EBI-352682">
        <id>P04792</id>
        <label>HSPB1</label>
    </interactant>
    <organismsDiffer>false</organismsDiffer>
    <experiments>3</experiments>
</comment>
<comment type="interaction">
    <interactant intactId="EBI-4280066">
        <id>Q9NZJ9</id>
    </interactant>
    <interactant intactId="EBI-466029">
        <id>P42858</id>
        <label>HTT</label>
    </interactant>
    <organismsDiffer>false</organismsDiffer>
    <experiments>6</experiments>
</comment>
<comment type="interaction">
    <interactant intactId="EBI-4280066">
        <id>Q9NZJ9</id>
    </interactant>
    <interactant intactId="EBI-751001">
        <id>Q14145</id>
        <label>KEAP1</label>
    </interactant>
    <organismsDiffer>false</organismsDiffer>
    <experiments>3</experiments>
</comment>
<comment type="interaction">
    <interactant intactId="EBI-4280066">
        <id>Q9NZJ9</id>
    </interactant>
    <interactant intactId="EBI-720609">
        <id>O76024</id>
        <label>WFS1</label>
    </interactant>
    <organismsDiffer>false</organismsDiffer>
    <experiments>3</experiments>
</comment>
<comment type="subcellular location">
    <subcellularLocation>
        <location evidence="7">Cytoplasm</location>
    </subcellularLocation>
</comment>
<comment type="alternative products">
    <event type="alternative splicing"/>
    <isoform>
        <id>Q9NZJ9-1</id>
        <name>1</name>
        <name>Alpha</name>
        <name>DIPP2alpha</name>
        <sequence type="displayed"/>
    </isoform>
    <isoform>
        <id>Q9NZJ9-2</id>
        <name>2</name>
        <name>Beta</name>
        <name>DIPP2beta</name>
        <sequence type="described" ref="VSP_014270"/>
    </isoform>
    <isoform>
        <id>Q9NZJ9-3</id>
        <name>3</name>
        <sequence type="described" ref="VSP_014269 VSP_014270"/>
    </isoform>
</comment>
<comment type="tissue specificity">
    <text evidence="6">Expressed in heart and, at lower level in skeletal muscle, pancreas and kidney.</text>
</comment>
<comment type="miscellaneous">
    <text evidence="6">the additional CAG codon in the isoform 2 (DIPP2beta) mRNA introduces a single, in-frame amino acid residue (Gln86) into the protein. This insertion engenders the DIPP2beta protein with 2- to 5-fold lower catalytic activity than isoform 1 (DIPP2alpha) for the diphosphoinositol polyphosphates and Ap6A, while granting activity towards the Ap5A.</text>
</comment>
<comment type="similarity">
    <text evidence="15">Belongs to the Nudix hydrolase family. DIPP subfamily.</text>
</comment>
<comment type="sequence caution" evidence="15">
    <conflict type="erroneous termination">
        <sequence resource="EMBL-CDS" id="AAF75563"/>
    </conflict>
    <text>Extended C-terminus.</text>
</comment>
<comment type="sequence caution" evidence="15">
    <conflict type="erroneous initiation">
        <sequence resource="EMBL-CDS" id="BAE16985"/>
    </conflict>
    <text>Extended N-terminus.</text>
</comment>
<proteinExistence type="evidence at protein level"/>
<evidence type="ECO:0000250" key="1"/>
<evidence type="ECO:0000250" key="2">
    <source>
        <dbReference type="UniProtKB" id="O95989"/>
    </source>
</evidence>
<evidence type="ECO:0000250" key="3">
    <source>
        <dbReference type="UniProtKB" id="Q8R2U6"/>
    </source>
</evidence>
<evidence type="ECO:0000250" key="4">
    <source>
        <dbReference type="UniProtKB" id="Q96G61"/>
    </source>
</evidence>
<evidence type="ECO:0000255" key="5">
    <source>
        <dbReference type="PROSITE-ProRule" id="PRU00794"/>
    </source>
</evidence>
<evidence type="ECO:0000269" key="6">
    <source>
    </source>
</evidence>
<evidence type="ECO:0000269" key="7">
    <source>
    </source>
</evidence>
<evidence type="ECO:0000269" key="8">
    <source>
    </source>
</evidence>
<evidence type="ECO:0000303" key="9">
    <source>
    </source>
</evidence>
<evidence type="ECO:0000303" key="10">
    <source>
    </source>
</evidence>
<evidence type="ECO:0000303" key="11">
    <source>
    </source>
</evidence>
<evidence type="ECO:0000303" key="12">
    <source>
    </source>
</evidence>
<evidence type="ECO:0000303" key="13">
    <source ref="3"/>
</evidence>
<evidence type="ECO:0000303" key="14">
    <source ref="5"/>
</evidence>
<evidence type="ECO:0000305" key="15"/>
<evidence type="ECO:0000305" key="16">
    <source>
    </source>
</evidence>
<evidence type="ECO:0000305" key="17">
    <source>
    </source>
</evidence>
<evidence type="ECO:0000312" key="18">
    <source>
        <dbReference type="HGNC" id="HGNC:8051"/>
    </source>
</evidence>
<evidence type="ECO:0007744" key="19">
    <source>
        <dbReference type="PDB" id="5LTU"/>
    </source>
</evidence>
<evidence type="ECO:0007744" key="20">
    <source>
    </source>
</evidence>
<evidence type="ECO:0007829" key="21">
    <source>
        <dbReference type="PDB" id="7NNJ"/>
    </source>
</evidence>